<proteinExistence type="inferred from homology"/>
<accession>B3E617</accession>
<protein>
    <recommendedName>
        <fullName evidence="1">Imidazole glycerol phosphate synthase subunit HisF</fullName>
        <ecNumber evidence="1">4.3.2.10</ecNumber>
    </recommendedName>
    <alternativeName>
        <fullName evidence="1">IGP synthase cyclase subunit</fullName>
    </alternativeName>
    <alternativeName>
        <fullName evidence="1">IGP synthase subunit HisF</fullName>
    </alternativeName>
    <alternativeName>
        <fullName evidence="1">ImGP synthase subunit HisF</fullName>
        <shortName evidence="1">IGPS subunit HisF</shortName>
    </alternativeName>
</protein>
<feature type="chain" id="PRO_1000135005" description="Imidazole glycerol phosphate synthase subunit HisF">
    <location>
        <begin position="1"/>
        <end position="254"/>
    </location>
</feature>
<feature type="active site" evidence="1">
    <location>
        <position position="11"/>
    </location>
</feature>
<feature type="active site" evidence="1">
    <location>
        <position position="130"/>
    </location>
</feature>
<gene>
    <name evidence="1" type="primary">hisF</name>
    <name type="ordered locus">Glov_1018</name>
</gene>
<reference key="1">
    <citation type="submission" date="2008-05" db="EMBL/GenBank/DDBJ databases">
        <title>Complete sequence of chromosome of Geobacter lovleyi SZ.</title>
        <authorList>
            <consortium name="US DOE Joint Genome Institute"/>
            <person name="Lucas S."/>
            <person name="Copeland A."/>
            <person name="Lapidus A."/>
            <person name="Glavina del Rio T."/>
            <person name="Dalin E."/>
            <person name="Tice H."/>
            <person name="Bruce D."/>
            <person name="Goodwin L."/>
            <person name="Pitluck S."/>
            <person name="Chertkov O."/>
            <person name="Meincke L."/>
            <person name="Brettin T."/>
            <person name="Detter J.C."/>
            <person name="Han C."/>
            <person name="Tapia R."/>
            <person name="Kuske C.R."/>
            <person name="Schmutz J."/>
            <person name="Larimer F."/>
            <person name="Land M."/>
            <person name="Hauser L."/>
            <person name="Kyrpides N."/>
            <person name="Mikhailova N."/>
            <person name="Sung Y."/>
            <person name="Fletcher K.E."/>
            <person name="Ritalahti K.M."/>
            <person name="Loeffler F.E."/>
            <person name="Richardson P."/>
        </authorList>
    </citation>
    <scope>NUCLEOTIDE SEQUENCE [LARGE SCALE GENOMIC DNA]</scope>
    <source>
        <strain>ATCC BAA-1151 / DSM 17278 / SZ</strain>
    </source>
</reference>
<organism>
    <name type="scientific">Trichlorobacter lovleyi (strain ATCC BAA-1151 / DSM 17278 / SZ)</name>
    <name type="common">Geobacter lovleyi</name>
    <dbReference type="NCBI Taxonomy" id="398767"/>
    <lineage>
        <taxon>Bacteria</taxon>
        <taxon>Pseudomonadati</taxon>
        <taxon>Thermodesulfobacteriota</taxon>
        <taxon>Desulfuromonadia</taxon>
        <taxon>Geobacterales</taxon>
        <taxon>Geobacteraceae</taxon>
        <taxon>Trichlorobacter</taxon>
    </lineage>
</organism>
<evidence type="ECO:0000255" key="1">
    <source>
        <dbReference type="HAMAP-Rule" id="MF_01013"/>
    </source>
</evidence>
<comment type="function">
    <text evidence="1">IGPS catalyzes the conversion of PRFAR and glutamine to IGP, AICAR and glutamate. The HisF subunit catalyzes the cyclization activity that produces IGP and AICAR from PRFAR using the ammonia provided by the HisH subunit.</text>
</comment>
<comment type="catalytic activity">
    <reaction evidence="1">
        <text>5-[(5-phospho-1-deoxy-D-ribulos-1-ylimino)methylamino]-1-(5-phospho-beta-D-ribosyl)imidazole-4-carboxamide + L-glutamine = D-erythro-1-(imidazol-4-yl)glycerol 3-phosphate + 5-amino-1-(5-phospho-beta-D-ribosyl)imidazole-4-carboxamide + L-glutamate + H(+)</text>
        <dbReference type="Rhea" id="RHEA:24793"/>
        <dbReference type="ChEBI" id="CHEBI:15378"/>
        <dbReference type="ChEBI" id="CHEBI:29985"/>
        <dbReference type="ChEBI" id="CHEBI:58278"/>
        <dbReference type="ChEBI" id="CHEBI:58359"/>
        <dbReference type="ChEBI" id="CHEBI:58475"/>
        <dbReference type="ChEBI" id="CHEBI:58525"/>
        <dbReference type="EC" id="4.3.2.10"/>
    </reaction>
</comment>
<comment type="pathway">
    <text evidence="1">Amino-acid biosynthesis; L-histidine biosynthesis; L-histidine from 5-phospho-alpha-D-ribose 1-diphosphate: step 5/9.</text>
</comment>
<comment type="subunit">
    <text evidence="1">Heterodimer of HisH and HisF.</text>
</comment>
<comment type="subcellular location">
    <subcellularLocation>
        <location evidence="1">Cytoplasm</location>
    </subcellularLocation>
</comment>
<comment type="similarity">
    <text evidence="1">Belongs to the HisA/HisF family.</text>
</comment>
<sequence length="254" mass="27482">MLTRRIIPCLDVTGGRVVKGVQFLELRDAGDPVEIAEAYDLQGADELTFLDITASSDGRDTMVDVVRHTAERVFMPLTVGGGIRVVEDIRRMLNAGADKVSINTAAVSRPEFVNEAAERFGSQCTVVAIDARQVPGEQRWEVYTHGGRKPTGIDAVEWAVRMESYGAGEILLTSMDRDGTKDGYDLALTRAVVDAVSIPVIASGGVGNLEHLYDGFTTAGASACLAASIFHFRQHTVQEAKQYLQGRGVPIRMV</sequence>
<name>HIS6_TRIL1</name>
<keyword id="KW-0028">Amino-acid biosynthesis</keyword>
<keyword id="KW-0963">Cytoplasm</keyword>
<keyword id="KW-0368">Histidine biosynthesis</keyword>
<keyword id="KW-0456">Lyase</keyword>
<keyword id="KW-1185">Reference proteome</keyword>
<dbReference type="EC" id="4.3.2.10" evidence="1"/>
<dbReference type="EMBL" id="CP001089">
    <property type="protein sequence ID" value="ACD94741.1"/>
    <property type="molecule type" value="Genomic_DNA"/>
</dbReference>
<dbReference type="RefSeq" id="WP_012469091.1">
    <property type="nucleotide sequence ID" value="NC_010814.1"/>
</dbReference>
<dbReference type="SMR" id="B3E617"/>
<dbReference type="STRING" id="398767.Glov_1018"/>
<dbReference type="KEGG" id="glo:Glov_1018"/>
<dbReference type="eggNOG" id="COG0107">
    <property type="taxonomic scope" value="Bacteria"/>
</dbReference>
<dbReference type="HOGENOM" id="CLU_048577_4_0_7"/>
<dbReference type="OrthoDB" id="9807749at2"/>
<dbReference type="UniPathway" id="UPA00031">
    <property type="reaction ID" value="UER00010"/>
</dbReference>
<dbReference type="Proteomes" id="UP000002420">
    <property type="component" value="Chromosome"/>
</dbReference>
<dbReference type="GO" id="GO:0005737">
    <property type="term" value="C:cytoplasm"/>
    <property type="evidence" value="ECO:0007669"/>
    <property type="project" value="UniProtKB-SubCell"/>
</dbReference>
<dbReference type="GO" id="GO:0000107">
    <property type="term" value="F:imidazoleglycerol-phosphate synthase activity"/>
    <property type="evidence" value="ECO:0007669"/>
    <property type="project" value="UniProtKB-UniRule"/>
</dbReference>
<dbReference type="GO" id="GO:0016829">
    <property type="term" value="F:lyase activity"/>
    <property type="evidence" value="ECO:0007669"/>
    <property type="project" value="UniProtKB-KW"/>
</dbReference>
<dbReference type="GO" id="GO:0000105">
    <property type="term" value="P:L-histidine biosynthetic process"/>
    <property type="evidence" value="ECO:0007669"/>
    <property type="project" value="UniProtKB-UniRule"/>
</dbReference>
<dbReference type="CDD" id="cd04731">
    <property type="entry name" value="HisF"/>
    <property type="match status" value="1"/>
</dbReference>
<dbReference type="FunFam" id="3.20.20.70:FF:000006">
    <property type="entry name" value="Imidazole glycerol phosphate synthase subunit HisF"/>
    <property type="match status" value="1"/>
</dbReference>
<dbReference type="Gene3D" id="3.20.20.70">
    <property type="entry name" value="Aldolase class I"/>
    <property type="match status" value="1"/>
</dbReference>
<dbReference type="HAMAP" id="MF_01013">
    <property type="entry name" value="HisF"/>
    <property type="match status" value="1"/>
</dbReference>
<dbReference type="InterPro" id="IPR013785">
    <property type="entry name" value="Aldolase_TIM"/>
</dbReference>
<dbReference type="InterPro" id="IPR006062">
    <property type="entry name" value="His_biosynth"/>
</dbReference>
<dbReference type="InterPro" id="IPR004651">
    <property type="entry name" value="HisF"/>
</dbReference>
<dbReference type="InterPro" id="IPR050064">
    <property type="entry name" value="IGPS_HisA/HisF"/>
</dbReference>
<dbReference type="InterPro" id="IPR011060">
    <property type="entry name" value="RibuloseP-bd_barrel"/>
</dbReference>
<dbReference type="NCBIfam" id="TIGR00735">
    <property type="entry name" value="hisF"/>
    <property type="match status" value="1"/>
</dbReference>
<dbReference type="PANTHER" id="PTHR21235:SF2">
    <property type="entry name" value="IMIDAZOLE GLYCEROL PHOSPHATE SYNTHASE HISHF"/>
    <property type="match status" value="1"/>
</dbReference>
<dbReference type="PANTHER" id="PTHR21235">
    <property type="entry name" value="IMIDAZOLE GLYCEROL PHOSPHATE SYNTHASE SUBUNIT HISF/H IGP SYNTHASE SUBUNIT HISF/H"/>
    <property type="match status" value="1"/>
</dbReference>
<dbReference type="Pfam" id="PF00977">
    <property type="entry name" value="His_biosynth"/>
    <property type="match status" value="1"/>
</dbReference>
<dbReference type="SUPFAM" id="SSF51366">
    <property type="entry name" value="Ribulose-phoshate binding barrel"/>
    <property type="match status" value="1"/>
</dbReference>